<comment type="function">
    <text evidence="3 4">Catalyzes the 2-beta-hydroxylation of several biologically active gibberellins, leading to the homeostatic regulation of their endogenous level. Catabolism of gibberellins (GAs) plays a central role in plant development (PubMed:12736788, PubMed:18952778). In vitro, converts GA1, GA20, and GA29 to the corresponding 2-beta-hydroxylated products GA8, GA29-catabolite, respectively (PubMed:12736788).</text>
</comment>
<comment type="catalytic activity">
    <reaction evidence="3">
        <text>gibberellin A1 + 2-oxoglutarate + O2 = gibberellin A8 + succinate + CO2</text>
        <dbReference type="Rhea" id="RHEA:15005"/>
        <dbReference type="ChEBI" id="CHEBI:15379"/>
        <dbReference type="ChEBI" id="CHEBI:16526"/>
        <dbReference type="ChEBI" id="CHEBI:16810"/>
        <dbReference type="ChEBI" id="CHEBI:30031"/>
        <dbReference type="ChEBI" id="CHEBI:58524"/>
        <dbReference type="ChEBI" id="CHEBI:58594"/>
        <dbReference type="EC" id="1.14.11.13"/>
    </reaction>
</comment>
<comment type="cofactor">
    <cofactor evidence="3">
        <name>L-ascorbate</name>
        <dbReference type="ChEBI" id="CHEBI:38290"/>
    </cofactor>
</comment>
<comment type="cofactor">
    <cofactor evidence="2">
        <name>Fe(2+)</name>
        <dbReference type="ChEBI" id="CHEBI:29033"/>
    </cofactor>
    <text evidence="2">Binds 1 Fe(2+) ion per subunit.</text>
</comment>
<comment type="tissue specificity">
    <text evidence="3">Expressed in roots, shoot apex, leaf blades, leaf sheaths, stems and flowers.</text>
</comment>
<comment type="induction">
    <text evidence="3">Induced by gibberellin.</text>
</comment>
<comment type="miscellaneous">
    <text evidence="3 4">Plants overexpressing GA2OX3 exhibit extremely dwarf phenotype and are unable to achieve phase transition from vegetative to reproductive growth.</text>
</comment>
<comment type="similarity">
    <text evidence="6">Belongs to the iron/ascorbate-dependent oxidoreductase family. GA2OX subfamily.</text>
</comment>
<organism>
    <name type="scientific">Oryza sativa subsp. japonica</name>
    <name type="common">Rice</name>
    <dbReference type="NCBI Taxonomy" id="39947"/>
    <lineage>
        <taxon>Eukaryota</taxon>
        <taxon>Viridiplantae</taxon>
        <taxon>Streptophyta</taxon>
        <taxon>Embryophyta</taxon>
        <taxon>Tracheophyta</taxon>
        <taxon>Spermatophyta</taxon>
        <taxon>Magnoliopsida</taxon>
        <taxon>Liliopsida</taxon>
        <taxon>Poales</taxon>
        <taxon>Poaceae</taxon>
        <taxon>BOP clade</taxon>
        <taxon>Oryzoideae</taxon>
        <taxon>Oryzeae</taxon>
        <taxon>Oryzinae</taxon>
        <taxon>Oryza</taxon>
        <taxon>Oryza sativa</taxon>
    </lineage>
</organism>
<accession>Q8S0S6</accession>
<proteinExistence type="evidence at protein level"/>
<gene>
    <name evidence="5" type="primary">GA2OX3</name>
    <name evidence="8" type="ordered locus">Os01g0757200</name>
    <name evidence="6" type="ordered locus">LOC_Os01g55240</name>
    <name evidence="7" type="ORF">OJ1414_E05.17</name>
</gene>
<dbReference type="EC" id="1.14.11.13" evidence="3"/>
<dbReference type="EMBL" id="AB092485">
    <property type="protein sequence ID" value="BAC16752.1"/>
    <property type="molecule type" value="mRNA"/>
</dbReference>
<dbReference type="EMBL" id="AP003375">
    <property type="protein sequence ID" value="BAB90150.1"/>
    <property type="molecule type" value="Genomic_DNA"/>
</dbReference>
<dbReference type="EMBL" id="AP008207">
    <property type="protein sequence ID" value="BAF06206.1"/>
    <property type="molecule type" value="Genomic_DNA"/>
</dbReference>
<dbReference type="EMBL" id="AP014957">
    <property type="protein sequence ID" value="BAS74413.1"/>
    <property type="molecule type" value="Genomic_DNA"/>
</dbReference>
<dbReference type="EMBL" id="AK060666">
    <property type="protein sequence ID" value="BAG87530.1"/>
    <property type="molecule type" value="mRNA"/>
</dbReference>
<dbReference type="EMBL" id="AK060714">
    <property type="protein sequence ID" value="BAG87549.1"/>
    <property type="molecule type" value="mRNA"/>
</dbReference>
<dbReference type="EMBL" id="AK101713">
    <property type="protein sequence ID" value="BAG95200.1"/>
    <property type="molecule type" value="mRNA"/>
</dbReference>
<dbReference type="PDB" id="6KU3">
    <property type="method" value="X-ray"/>
    <property type="resolution" value="2.15 A"/>
    <property type="chains" value="A/B/C/D=1-327"/>
</dbReference>
<dbReference type="PDBsum" id="6KU3"/>
<dbReference type="SMR" id="Q8S0S6"/>
<dbReference type="FunCoup" id="Q8S0S6">
    <property type="interactions" value="205"/>
</dbReference>
<dbReference type="STRING" id="39947.Q8S0S6"/>
<dbReference type="PaxDb" id="39947-Q8S0S6"/>
<dbReference type="EnsemblPlants" id="Os01t0757200-01">
    <property type="protein sequence ID" value="Os01t0757200-01"/>
    <property type="gene ID" value="Os01g0757200"/>
</dbReference>
<dbReference type="GeneID" id="4325145"/>
<dbReference type="Gramene" id="Os01t0757200-01">
    <property type="protein sequence ID" value="Os01t0757200-01"/>
    <property type="gene ID" value="Os01g0757200"/>
</dbReference>
<dbReference type="KEGG" id="dosa:Os01g0757200"/>
<dbReference type="KEGG" id="osa:4325145"/>
<dbReference type="eggNOG" id="KOG0143">
    <property type="taxonomic scope" value="Eukaryota"/>
</dbReference>
<dbReference type="HOGENOM" id="CLU_010119_16_3_1"/>
<dbReference type="InParanoid" id="Q8S0S6"/>
<dbReference type="OMA" id="KQIGQSG"/>
<dbReference type="OrthoDB" id="288590at2759"/>
<dbReference type="BioCyc" id="MetaCyc:MONOMER-840"/>
<dbReference type="PlantReactome" id="R-OSA-9631623">
    <property type="pathway name" value="Regulation of embryo development"/>
</dbReference>
<dbReference type="Proteomes" id="UP000000763">
    <property type="component" value="Chromosome 1"/>
</dbReference>
<dbReference type="Proteomes" id="UP000059680">
    <property type="component" value="Chromosome 1"/>
</dbReference>
<dbReference type="GO" id="GO:0045543">
    <property type="term" value="F:gibberellin 2-beta-dioxygenase activity"/>
    <property type="evidence" value="ECO:0000314"/>
    <property type="project" value="UniProtKB"/>
</dbReference>
<dbReference type="GO" id="GO:0046872">
    <property type="term" value="F:metal ion binding"/>
    <property type="evidence" value="ECO:0007669"/>
    <property type="project" value="UniProtKB-KW"/>
</dbReference>
<dbReference type="GO" id="GO:0045487">
    <property type="term" value="P:gibberellin catabolic process"/>
    <property type="evidence" value="ECO:0000318"/>
    <property type="project" value="GO_Central"/>
</dbReference>
<dbReference type="GO" id="GO:0009685">
    <property type="term" value="P:gibberellin metabolic process"/>
    <property type="evidence" value="ECO:0000315"/>
    <property type="project" value="UniProtKB"/>
</dbReference>
<dbReference type="GO" id="GO:0009416">
    <property type="term" value="P:response to light stimulus"/>
    <property type="evidence" value="ECO:0000318"/>
    <property type="project" value="GO_Central"/>
</dbReference>
<dbReference type="FunFam" id="2.60.120.330:FF:000014">
    <property type="entry name" value="Gibberellin 2-beta-dioxygenase 1"/>
    <property type="match status" value="1"/>
</dbReference>
<dbReference type="Gene3D" id="2.60.120.330">
    <property type="entry name" value="B-lactam Antibiotic, Isopenicillin N Synthase, Chain"/>
    <property type="match status" value="1"/>
</dbReference>
<dbReference type="InterPro" id="IPR026992">
    <property type="entry name" value="DIOX_N"/>
</dbReference>
<dbReference type="InterPro" id="IPR044861">
    <property type="entry name" value="IPNS-like_FE2OG_OXY"/>
</dbReference>
<dbReference type="InterPro" id="IPR027443">
    <property type="entry name" value="IPNS-like_sf"/>
</dbReference>
<dbReference type="InterPro" id="IPR050231">
    <property type="entry name" value="Iron_ascorbate_oxido_reductase"/>
</dbReference>
<dbReference type="InterPro" id="IPR005123">
    <property type="entry name" value="Oxoglu/Fe-dep_dioxygenase_dom"/>
</dbReference>
<dbReference type="PANTHER" id="PTHR47990">
    <property type="entry name" value="2-OXOGLUTARATE (2OG) AND FE(II)-DEPENDENT OXYGENASE SUPERFAMILY PROTEIN-RELATED"/>
    <property type="match status" value="1"/>
</dbReference>
<dbReference type="Pfam" id="PF03171">
    <property type="entry name" value="2OG-FeII_Oxy"/>
    <property type="match status" value="1"/>
</dbReference>
<dbReference type="Pfam" id="PF14226">
    <property type="entry name" value="DIOX_N"/>
    <property type="match status" value="1"/>
</dbReference>
<dbReference type="SUPFAM" id="SSF51197">
    <property type="entry name" value="Clavaminate synthase-like"/>
    <property type="match status" value="1"/>
</dbReference>
<dbReference type="PROSITE" id="PS51471">
    <property type="entry name" value="FE2OG_OXY"/>
    <property type="match status" value="1"/>
</dbReference>
<reference key="1">
    <citation type="journal article" date="2003" name="J. Plant Res.">
        <title>Expression of novel rice gibberellin 2-oxidase gene is under homeostatic regulation by biologically active gibberellins.</title>
        <authorList>
            <person name="Sakai M."/>
            <person name="Sakamoto T."/>
            <person name="Saito T."/>
            <person name="Matsuoka M."/>
            <person name="Tanaka H."/>
            <person name="Kobayashi M."/>
        </authorList>
    </citation>
    <scope>NUCLEOTIDE SEQUENCE [GENOMIC DNA]</scope>
    <scope>FUNCTION</scope>
    <scope>CATALYTIC ACTIVITY</scope>
    <scope>COFACTOR</scope>
    <scope>TISSUE SPECIFICITY</scope>
    <scope>INDUCTION BY GIBBERELLIN</scope>
    <source>
        <strain>cv. Nipponbare</strain>
    </source>
</reference>
<reference key="2">
    <citation type="journal article" date="2002" name="Nature">
        <title>The genome sequence and structure of rice chromosome 1.</title>
        <authorList>
            <person name="Sasaki T."/>
            <person name="Matsumoto T."/>
            <person name="Yamamoto K."/>
            <person name="Sakata K."/>
            <person name="Baba T."/>
            <person name="Katayose Y."/>
            <person name="Wu J."/>
            <person name="Niimura Y."/>
            <person name="Cheng Z."/>
            <person name="Nagamura Y."/>
            <person name="Antonio B.A."/>
            <person name="Kanamori H."/>
            <person name="Hosokawa S."/>
            <person name="Masukawa M."/>
            <person name="Arikawa K."/>
            <person name="Chiden Y."/>
            <person name="Hayashi M."/>
            <person name="Okamoto M."/>
            <person name="Ando T."/>
            <person name="Aoki H."/>
            <person name="Arita K."/>
            <person name="Hamada M."/>
            <person name="Harada C."/>
            <person name="Hijishita S."/>
            <person name="Honda M."/>
            <person name="Ichikawa Y."/>
            <person name="Idonuma A."/>
            <person name="Iijima M."/>
            <person name="Ikeda M."/>
            <person name="Ikeno M."/>
            <person name="Ito S."/>
            <person name="Ito T."/>
            <person name="Ito Y."/>
            <person name="Ito Y."/>
            <person name="Iwabuchi A."/>
            <person name="Kamiya K."/>
            <person name="Karasawa W."/>
            <person name="Katagiri S."/>
            <person name="Kikuta A."/>
            <person name="Kobayashi N."/>
            <person name="Kono I."/>
            <person name="Machita K."/>
            <person name="Maehara T."/>
            <person name="Mizuno H."/>
            <person name="Mizubayashi T."/>
            <person name="Mukai Y."/>
            <person name="Nagasaki H."/>
            <person name="Nakashima M."/>
            <person name="Nakama Y."/>
            <person name="Nakamichi Y."/>
            <person name="Nakamura M."/>
            <person name="Namiki N."/>
            <person name="Negishi M."/>
            <person name="Ohta I."/>
            <person name="Ono N."/>
            <person name="Saji S."/>
            <person name="Sakai K."/>
            <person name="Shibata M."/>
            <person name="Shimokawa T."/>
            <person name="Shomura A."/>
            <person name="Song J."/>
            <person name="Takazaki Y."/>
            <person name="Terasawa K."/>
            <person name="Tsuji K."/>
            <person name="Waki K."/>
            <person name="Yamagata H."/>
            <person name="Yamane H."/>
            <person name="Yoshiki S."/>
            <person name="Yoshihara R."/>
            <person name="Yukawa K."/>
            <person name="Zhong H."/>
            <person name="Iwama H."/>
            <person name="Endo T."/>
            <person name="Ito H."/>
            <person name="Hahn J.H."/>
            <person name="Kim H.-I."/>
            <person name="Eun M.-Y."/>
            <person name="Yano M."/>
            <person name="Jiang J."/>
            <person name="Gojobori T."/>
        </authorList>
    </citation>
    <scope>NUCLEOTIDE SEQUENCE [LARGE SCALE GENOMIC DNA]</scope>
    <source>
        <strain>cv. Nipponbare</strain>
    </source>
</reference>
<reference key="3">
    <citation type="journal article" date="2005" name="Nature">
        <title>The map-based sequence of the rice genome.</title>
        <authorList>
            <consortium name="International rice genome sequencing project (IRGSP)"/>
        </authorList>
    </citation>
    <scope>NUCLEOTIDE SEQUENCE [LARGE SCALE GENOMIC DNA]</scope>
    <source>
        <strain>cv. Nipponbare</strain>
    </source>
</reference>
<reference key="4">
    <citation type="journal article" date="2008" name="Nucleic Acids Res.">
        <title>The rice annotation project database (RAP-DB): 2008 update.</title>
        <authorList>
            <consortium name="The rice annotation project (RAP)"/>
        </authorList>
    </citation>
    <scope>GENOME REANNOTATION</scope>
    <source>
        <strain>cv. Nipponbare</strain>
    </source>
</reference>
<reference key="5">
    <citation type="journal article" date="2013" name="Rice">
        <title>Improvement of the Oryza sativa Nipponbare reference genome using next generation sequence and optical map data.</title>
        <authorList>
            <person name="Kawahara Y."/>
            <person name="de la Bastide M."/>
            <person name="Hamilton J.P."/>
            <person name="Kanamori H."/>
            <person name="McCombie W.R."/>
            <person name="Ouyang S."/>
            <person name="Schwartz D.C."/>
            <person name="Tanaka T."/>
            <person name="Wu J."/>
            <person name="Zhou S."/>
            <person name="Childs K.L."/>
            <person name="Davidson R.M."/>
            <person name="Lin H."/>
            <person name="Quesada-Ocampo L."/>
            <person name="Vaillancourt B."/>
            <person name="Sakai H."/>
            <person name="Lee S.S."/>
            <person name="Kim J."/>
            <person name="Numa H."/>
            <person name="Itoh T."/>
            <person name="Buell C.R."/>
            <person name="Matsumoto T."/>
        </authorList>
    </citation>
    <scope>GENOME REANNOTATION</scope>
    <source>
        <strain>cv. Nipponbare</strain>
    </source>
</reference>
<reference key="6">
    <citation type="journal article" date="2003" name="Science">
        <title>Collection, mapping, and annotation of over 28,000 cDNA clones from japonica rice.</title>
        <authorList>
            <consortium name="The rice full-length cDNA consortium"/>
        </authorList>
    </citation>
    <scope>NUCLEOTIDE SEQUENCE [LARGE SCALE MRNA]</scope>
    <source>
        <strain>cv. Nipponbare</strain>
    </source>
</reference>
<reference key="7">
    <citation type="journal article" date="2008" name="Plant Cell">
        <title>A novel class of gibberellin 2-oxidases control semidwarfism, tillering, and root development in rice.</title>
        <authorList>
            <person name="Lo S.F."/>
            <person name="Yang S.Y."/>
            <person name="Chen K.T."/>
            <person name="Hsing Y.I."/>
            <person name="Zeevaart J.A."/>
            <person name="Chen L.J."/>
            <person name="Yu S.M."/>
        </authorList>
    </citation>
    <scope>FUNCTION</scope>
</reference>
<feature type="chain" id="PRO_0000444357" description="Gibberellin 2-beta-dioxygenase 3">
    <location>
        <begin position="1"/>
        <end position="327"/>
    </location>
</feature>
<feature type="domain" description="Fe2OG dioxygenase" evidence="2">
    <location>
        <begin position="173"/>
        <end position="278"/>
    </location>
</feature>
<feature type="binding site" evidence="1">
    <location>
        <position position="183"/>
    </location>
    <ligand>
        <name>2-oxoglutarate</name>
        <dbReference type="ChEBI" id="CHEBI:16810"/>
    </ligand>
</feature>
<feature type="binding site" evidence="2">
    <location>
        <position position="202"/>
    </location>
    <ligand>
        <name>Fe cation</name>
        <dbReference type="ChEBI" id="CHEBI:24875"/>
    </ligand>
</feature>
<feature type="binding site" evidence="2">
    <location>
        <position position="204"/>
    </location>
    <ligand>
        <name>Fe cation</name>
        <dbReference type="ChEBI" id="CHEBI:24875"/>
    </ligand>
</feature>
<feature type="binding site" evidence="2">
    <location>
        <position position="259"/>
    </location>
    <ligand>
        <name>Fe cation</name>
        <dbReference type="ChEBI" id="CHEBI:24875"/>
    </ligand>
</feature>
<feature type="binding site" evidence="2">
    <location>
        <position position="269"/>
    </location>
    <ligand>
        <name>2-oxoglutarate</name>
        <dbReference type="ChEBI" id="CHEBI:16810"/>
    </ligand>
</feature>
<feature type="binding site" evidence="1">
    <location>
        <position position="271"/>
    </location>
    <ligand>
        <name>2-oxoglutarate</name>
        <dbReference type="ChEBI" id="CHEBI:16810"/>
    </ligand>
</feature>
<feature type="strand" evidence="9">
    <location>
        <begin position="15"/>
        <end position="17"/>
    </location>
</feature>
<feature type="strand" evidence="9">
    <location>
        <begin position="30"/>
        <end position="32"/>
    </location>
</feature>
<feature type="helix" evidence="9">
    <location>
        <begin position="38"/>
        <end position="48"/>
    </location>
</feature>
<feature type="strand" evidence="9">
    <location>
        <begin position="50"/>
        <end position="56"/>
    </location>
</feature>
<feature type="helix" evidence="9">
    <location>
        <begin position="61"/>
        <end position="76"/>
    </location>
</feature>
<feature type="helix" evidence="9">
    <location>
        <begin position="79"/>
        <end position="83"/>
    </location>
</feature>
<feature type="strand" evidence="9">
    <location>
        <begin position="89"/>
        <end position="98"/>
    </location>
</feature>
<feature type="turn" evidence="9">
    <location>
        <begin position="99"/>
        <end position="102"/>
    </location>
</feature>
<feature type="strand" evidence="9">
    <location>
        <begin position="103"/>
        <end position="115"/>
    </location>
</feature>
<feature type="helix" evidence="9">
    <location>
        <begin position="129"/>
        <end position="156"/>
    </location>
</feature>
<feature type="turn" evidence="9">
    <location>
        <begin position="162"/>
        <end position="166"/>
    </location>
</feature>
<feature type="helix" evidence="9">
    <location>
        <begin position="167"/>
        <end position="170"/>
    </location>
</feature>
<feature type="strand" evidence="9">
    <location>
        <begin position="177"/>
        <end position="183"/>
    </location>
</feature>
<feature type="helix" evidence="9">
    <location>
        <begin position="187"/>
        <end position="189"/>
    </location>
</feature>
<feature type="strand" evidence="9">
    <location>
        <begin position="192"/>
        <end position="202"/>
    </location>
</feature>
<feature type="strand" evidence="9">
    <location>
        <begin position="205"/>
        <end position="213"/>
    </location>
</feature>
<feature type="strand" evidence="9">
    <location>
        <begin position="219"/>
        <end position="222"/>
    </location>
</feature>
<feature type="strand" evidence="9">
    <location>
        <begin position="228"/>
        <end position="230"/>
    </location>
</feature>
<feature type="strand" evidence="9">
    <location>
        <begin position="237"/>
        <end position="242"/>
    </location>
</feature>
<feature type="helix" evidence="9">
    <location>
        <begin position="244"/>
        <end position="249"/>
    </location>
</feature>
<feature type="turn" evidence="9">
    <location>
        <begin position="250"/>
        <end position="252"/>
    </location>
</feature>
<feature type="strand" evidence="9">
    <location>
        <begin position="259"/>
        <end position="262"/>
    </location>
</feature>
<feature type="strand" evidence="9">
    <location>
        <begin position="265"/>
        <end position="267"/>
    </location>
</feature>
<feature type="strand" evidence="9">
    <location>
        <begin position="269"/>
        <end position="276"/>
    </location>
</feature>
<feature type="helix" evidence="9">
    <location>
        <begin position="288"/>
        <end position="290"/>
    </location>
</feature>
<feature type="helix" evidence="9">
    <location>
        <begin position="304"/>
        <end position="313"/>
    </location>
</feature>
<feature type="helix" evidence="9">
    <location>
        <begin position="322"/>
        <end position="324"/>
    </location>
</feature>
<keyword id="KW-0002">3D-structure</keyword>
<keyword id="KW-0223">Dioxygenase</keyword>
<keyword id="KW-0408">Iron</keyword>
<keyword id="KW-0479">Metal-binding</keyword>
<keyword id="KW-0560">Oxidoreductase</keyword>
<keyword id="KW-1185">Reference proteome</keyword>
<evidence type="ECO:0000250" key="1">
    <source>
        <dbReference type="UniProtKB" id="D4N500"/>
    </source>
</evidence>
<evidence type="ECO:0000255" key="2">
    <source>
        <dbReference type="PROSITE-ProRule" id="PRU00805"/>
    </source>
</evidence>
<evidence type="ECO:0000269" key="3">
    <source>
    </source>
</evidence>
<evidence type="ECO:0000269" key="4">
    <source>
    </source>
</evidence>
<evidence type="ECO:0000303" key="5">
    <source>
    </source>
</evidence>
<evidence type="ECO:0000305" key="6"/>
<evidence type="ECO:0000312" key="7">
    <source>
        <dbReference type="EMBL" id="BAB90150.1"/>
    </source>
</evidence>
<evidence type="ECO:0000312" key="8">
    <source>
        <dbReference type="EMBL" id="BAF06206.1"/>
    </source>
</evidence>
<evidence type="ECO:0007829" key="9">
    <source>
        <dbReference type="PDB" id="6KU3"/>
    </source>
</evidence>
<sequence>MVVLAGPPAVDHIPLLRSPDPGDVFSGVPVVDLGSPGAARAVVDACERYGFFKVVNHGVATDTMDKAESEAVRFFSQTQPDKDRSGPAYPFGYGSKRIGFNGDMGWLEYLLLALDDASLADACTVPSCAVFRAALNEYISGVRKVAVRVMEAMSEGLGIAQADALSALVTAEGSDQVFRVNHYPPCRALQGLGCSVTGFGEHTDPQLVSVLRSNGTSGLQIALRDGQWVSVPSDRDSFFVNVGDSLQVLTNGRFKSVKHRVVANSLKSRVSFIYFGGPPLAQRIAPLPQLLGEGEQSLYKEFTWDEYKKAAYKSRLGDNRLAQFEKK</sequence>
<protein>
    <recommendedName>
        <fullName evidence="6">Gibberellin 2-beta-dioxygenase 3</fullName>
        <ecNumber evidence="3">1.14.11.13</ecNumber>
    </recommendedName>
    <alternativeName>
        <fullName evidence="6">Gibberellin 2-beta-hydroxylase 3</fullName>
    </alternativeName>
    <alternativeName>
        <fullName evidence="5">Gibberellin 2-oxidase 3</fullName>
        <shortName evidence="5">GA 2-oxidase 3</shortName>
        <shortName evidence="5">OsGA2ox3</shortName>
    </alternativeName>
</protein>
<name>G2OX3_ORYSJ</name>